<gene>
    <name type="primary">secF</name>
    <name type="ordered locus">HVO_1975</name>
</gene>
<dbReference type="EMBL" id="AF395892">
    <property type="protein sequence ID" value="AAL74408.1"/>
    <property type="molecule type" value="Genomic_DNA"/>
</dbReference>
<dbReference type="EMBL" id="CP001956">
    <property type="protein sequence ID" value="ADE04671.1"/>
    <property type="molecule type" value="Genomic_DNA"/>
</dbReference>
<dbReference type="RefSeq" id="WP_004041854.1">
    <property type="nucleotide sequence ID" value="NC_013967.1"/>
</dbReference>
<dbReference type="SMR" id="D4GTK4"/>
<dbReference type="STRING" id="309800.HVO_1975"/>
<dbReference type="PaxDb" id="309800-C498_05146"/>
<dbReference type="EnsemblBacteria" id="ADE04671">
    <property type="protein sequence ID" value="ADE04671"/>
    <property type="gene ID" value="HVO_1975"/>
</dbReference>
<dbReference type="GeneID" id="8925104"/>
<dbReference type="KEGG" id="hvo:HVO_1975"/>
<dbReference type="eggNOG" id="arCOG03054">
    <property type="taxonomic scope" value="Archaea"/>
</dbReference>
<dbReference type="HOGENOM" id="CLU_060478_0_0_2"/>
<dbReference type="OrthoDB" id="85411at2157"/>
<dbReference type="Proteomes" id="UP000008243">
    <property type="component" value="Chromosome"/>
</dbReference>
<dbReference type="GO" id="GO:0005886">
    <property type="term" value="C:plasma membrane"/>
    <property type="evidence" value="ECO:0007669"/>
    <property type="project" value="UniProtKB-SubCell"/>
</dbReference>
<dbReference type="GO" id="GO:0065002">
    <property type="term" value="P:intracellular protein transmembrane transport"/>
    <property type="evidence" value="ECO:0007669"/>
    <property type="project" value="UniProtKB-UniRule"/>
</dbReference>
<dbReference type="GO" id="GO:0006605">
    <property type="term" value="P:protein targeting"/>
    <property type="evidence" value="ECO:0007669"/>
    <property type="project" value="UniProtKB-UniRule"/>
</dbReference>
<dbReference type="Gene3D" id="1.20.1640.10">
    <property type="entry name" value="Multidrug efflux transporter AcrB transmembrane domain"/>
    <property type="match status" value="1"/>
</dbReference>
<dbReference type="HAMAP" id="MF_01464_A">
    <property type="entry name" value="SecF_A"/>
    <property type="match status" value="1"/>
</dbReference>
<dbReference type="InterPro" id="IPR022813">
    <property type="entry name" value="SecD/SecF_arch_bac"/>
</dbReference>
<dbReference type="InterPro" id="IPR022646">
    <property type="entry name" value="SecD/SecF_CS"/>
</dbReference>
<dbReference type="InterPro" id="IPR053476">
    <property type="entry name" value="SecD/SecF_export"/>
</dbReference>
<dbReference type="InterPro" id="IPR048634">
    <property type="entry name" value="SecD_SecF_C"/>
</dbReference>
<dbReference type="InterPro" id="IPR024921">
    <property type="entry name" value="SecF_arc"/>
</dbReference>
<dbReference type="NCBIfam" id="NF006355">
    <property type="entry name" value="PRK08578.1-3"/>
    <property type="match status" value="1"/>
</dbReference>
<dbReference type="NCBIfam" id="NF041305">
    <property type="entry name" value="SecF_Halo"/>
    <property type="match status" value="1"/>
</dbReference>
<dbReference type="PANTHER" id="PTHR30081:SF8">
    <property type="entry name" value="PROTEIN TRANSLOCASE SUBUNIT SECF"/>
    <property type="match status" value="1"/>
</dbReference>
<dbReference type="PANTHER" id="PTHR30081">
    <property type="entry name" value="PROTEIN-EXPORT MEMBRANE PROTEIN SEC"/>
    <property type="match status" value="1"/>
</dbReference>
<dbReference type="Pfam" id="PF07549">
    <property type="entry name" value="Sec_GG"/>
    <property type="match status" value="1"/>
</dbReference>
<dbReference type="Pfam" id="PF02355">
    <property type="entry name" value="SecD_SecF_C"/>
    <property type="match status" value="1"/>
</dbReference>
<dbReference type="SUPFAM" id="SSF82866">
    <property type="entry name" value="Multidrug efflux transporter AcrB transmembrane domain"/>
    <property type="match status" value="1"/>
</dbReference>
<evidence type="ECO:0000255" key="1"/>
<evidence type="ECO:0000269" key="2">
    <source>
    </source>
</evidence>
<evidence type="ECO:0000305" key="3"/>
<comment type="function">
    <text evidence="2">Involved in protein export.</text>
</comment>
<comment type="subunit">
    <text evidence="2">Part of the protein translocation apparatus. Forms complexes with SecD.</text>
</comment>
<comment type="subcellular location">
    <subcellularLocation>
        <location evidence="2">Cell membrane</location>
        <topology evidence="2">Multi-pass membrane protein</topology>
    </subcellularLocation>
</comment>
<comment type="disruption phenotype">
    <text evidence="2">A double secD and secF deletion grows very poorly on solid medium at 45 degrees Celsius, confers a severe cold-sensitive growth phenotype (30 degrees Celsius), as well as having defects in Sec-dependent protein translocation. Has no effects on Sec-independent Tat substrate protein export.</text>
</comment>
<comment type="similarity">
    <text evidence="3">Belongs to the SecD/SecF family. SecF subfamily.</text>
</comment>
<protein>
    <recommendedName>
        <fullName>Protein-export membrane protein SecF</fullName>
    </recommendedName>
</protein>
<proteinExistence type="evidence at protein level"/>
<name>SECF_HALVD</name>
<reference key="1">
    <citation type="journal article" date="2006" name="J. Bacteriol.">
        <title>Archaeal and bacterial SecD and SecF homologs exhibit striking structural and functional conservation.</title>
        <authorList>
            <person name="Hand N.J."/>
            <person name="Klein R."/>
            <person name="Laskewitz A."/>
            <person name="Pohlschroder M."/>
        </authorList>
    </citation>
    <scope>NUCLEOTIDE SEQUENCE [GENOMIC DNA]</scope>
    <scope>FUNCTION IN PROTEIN EXPORT</scope>
    <scope>SUBUNIT</scope>
    <scope>SUBCELLULAR LOCATION</scope>
    <scope>DISRUPTION PHENOTYPE</scope>
    <scope>PROBABLE OPERON STRUCTURE</scope>
    <source>
        <strain>DS2 / DS70</strain>
        <strain>DS2 / DSM 5716 / WFD11</strain>
    </source>
</reference>
<reference key="2">
    <citation type="journal article" date="2010" name="PLoS ONE">
        <title>The complete genome sequence of Haloferax volcanii DS2, a model archaeon.</title>
        <authorList>
            <person name="Hartman A.L."/>
            <person name="Norais C."/>
            <person name="Badger J.H."/>
            <person name="Delmas S."/>
            <person name="Haldenby S."/>
            <person name="Madupu R."/>
            <person name="Robinson J."/>
            <person name="Khouri H."/>
            <person name="Ren Q."/>
            <person name="Lowe T.M."/>
            <person name="Maupin-Furlow J."/>
            <person name="Pohlschroder M."/>
            <person name="Daniels C."/>
            <person name="Pfeiffer F."/>
            <person name="Allers T."/>
            <person name="Eisen J.A."/>
        </authorList>
    </citation>
    <scope>NUCLEOTIDE SEQUENCE [LARGE SCALE GENOMIC DNA]</scope>
    <source>
        <strain>ATCC 29605 / DSM 3757 / JCM 8879 / NBRC 14742 / NCIMB 2012 / VKM B-1768 / DS2</strain>
    </source>
</reference>
<keyword id="KW-1003">Cell membrane</keyword>
<keyword id="KW-0472">Membrane</keyword>
<keyword id="KW-0653">Protein transport</keyword>
<keyword id="KW-1185">Reference proteome</keyword>
<keyword id="KW-0811">Translocation</keyword>
<keyword id="KW-0812">Transmembrane</keyword>
<keyword id="KW-1133">Transmembrane helix</keyword>
<keyword id="KW-0813">Transport</keyword>
<accession>D4GTK4</accession>
<accession>Q8U4U0</accession>
<organism>
    <name type="scientific">Haloferax volcanii (strain ATCC 29605 / DSM 3757 / JCM 8879 / NBRC 14742 / NCIMB 2012 / VKM B-1768 / DS2)</name>
    <name type="common">Halobacterium volcanii</name>
    <dbReference type="NCBI Taxonomy" id="309800"/>
    <lineage>
        <taxon>Archaea</taxon>
        <taxon>Methanobacteriati</taxon>
        <taxon>Methanobacteriota</taxon>
        <taxon>Stenosarchaea group</taxon>
        <taxon>Halobacteria</taxon>
        <taxon>Halobacteriales</taxon>
        <taxon>Haloferacaceae</taxon>
        <taxon>Haloferax</taxon>
    </lineage>
</organism>
<feature type="chain" id="PRO_0000412203" description="Protein-export membrane protein SecF">
    <location>
        <begin position="1"/>
        <end position="287"/>
    </location>
</feature>
<feature type="topological domain" description="Cytoplasmic" evidence="1">
    <location>
        <begin position="1"/>
        <end position="18"/>
    </location>
</feature>
<feature type="transmembrane region" description="Helical" evidence="1">
    <location>
        <begin position="19"/>
        <end position="39"/>
    </location>
</feature>
<feature type="topological domain" description="Extracellular" evidence="1">
    <location>
        <begin position="40"/>
        <end position="129"/>
    </location>
</feature>
<feature type="transmembrane region" description="Helical" evidence="1">
    <location>
        <begin position="130"/>
        <end position="150"/>
    </location>
</feature>
<feature type="topological domain" description="Cytoplasmic" evidence="1">
    <location>
        <begin position="151"/>
        <end position="152"/>
    </location>
</feature>
<feature type="transmembrane region" description="Helical" evidence="1">
    <location>
        <begin position="153"/>
        <end position="173"/>
    </location>
</feature>
<feature type="topological domain" description="Extracellular" evidence="1">
    <location>
        <begin position="174"/>
        <end position="176"/>
    </location>
</feature>
<feature type="transmembrane region" description="Helical" evidence="1">
    <location>
        <begin position="177"/>
        <end position="197"/>
    </location>
</feature>
<feature type="topological domain" description="Cytoplasmic" evidence="1">
    <location>
        <begin position="198"/>
        <end position="225"/>
    </location>
</feature>
<feature type="transmembrane region" description="Helical" evidence="1">
    <location>
        <begin position="226"/>
        <end position="248"/>
    </location>
</feature>
<feature type="topological domain" description="Extracellular" evidence="1">
    <location>
        <begin position="249"/>
        <end position="251"/>
    </location>
</feature>
<feature type="transmembrane region" description="Helical" evidence="1">
    <location>
        <begin position="252"/>
        <end position="274"/>
    </location>
</feature>
<feature type="topological domain" description="Cytoplasmic" evidence="1">
    <location>
        <begin position="275"/>
        <end position="287"/>
    </location>
</feature>
<sequence length="287" mass="30425">MVEFTVPEVDYTRYTNRQLAAVPLAVLAVALLVIGGWYVATGAPVNPGVDFTGGTELRIATDAPQSEVAAAFDSQPESIRSVAADGTYVVTFQSGSATSTELQTQAEDAGFEVRSIDAVSANFGGETQLLALGGLAVAFAGMSVLVFAMFRSFVPSIAVVLSAFSDIVIPVALMNLFGIELSLGTVAALLMLIGYSVDSDILLNNHVLRRSGDFYESTARAMRTGVTMTLTSIAAMIVMTIMATLFGIQLLAAIGTVLVFGLTADLMNTYMLNVTLLRWYKFEGVTR</sequence>